<dbReference type="EMBL" id="CR858174">
    <property type="protein sequence ID" value="CAH90413.1"/>
    <property type="molecule type" value="mRNA"/>
</dbReference>
<dbReference type="RefSeq" id="NP_001125207.1">
    <property type="nucleotide sequence ID" value="NM_001131735.1"/>
</dbReference>
<dbReference type="SMR" id="Q5RCU4"/>
<dbReference type="STRING" id="9601.ENSPPYP00000003973"/>
<dbReference type="GeneID" id="100172098"/>
<dbReference type="KEGG" id="pon:100172098"/>
<dbReference type="CTD" id="55553"/>
<dbReference type="eggNOG" id="KOG0528">
    <property type="taxonomic scope" value="Eukaryota"/>
</dbReference>
<dbReference type="InParanoid" id="Q5RCU4"/>
<dbReference type="OrthoDB" id="6247875at2759"/>
<dbReference type="Proteomes" id="UP000001595">
    <property type="component" value="Unplaced"/>
</dbReference>
<dbReference type="GO" id="GO:0005737">
    <property type="term" value="C:cytoplasm"/>
    <property type="evidence" value="ECO:0007669"/>
    <property type="project" value="UniProtKB-SubCell"/>
</dbReference>
<dbReference type="GO" id="GO:0005634">
    <property type="term" value="C:nucleus"/>
    <property type="evidence" value="ECO:0000250"/>
    <property type="project" value="UniProtKB"/>
</dbReference>
<dbReference type="GO" id="GO:0003677">
    <property type="term" value="F:DNA binding"/>
    <property type="evidence" value="ECO:0000250"/>
    <property type="project" value="UniProtKB"/>
</dbReference>
<dbReference type="GO" id="GO:0003700">
    <property type="term" value="F:DNA-binding transcription factor activity"/>
    <property type="evidence" value="ECO:0000250"/>
    <property type="project" value="UniProtKB"/>
</dbReference>
<dbReference type="GO" id="GO:0000981">
    <property type="term" value="F:DNA-binding transcription factor activity, RNA polymerase II-specific"/>
    <property type="evidence" value="ECO:0007669"/>
    <property type="project" value="TreeGrafter"/>
</dbReference>
<dbReference type="GO" id="GO:0001217">
    <property type="term" value="F:DNA-binding transcription repressor activity"/>
    <property type="evidence" value="ECO:0000250"/>
    <property type="project" value="UniProtKB"/>
</dbReference>
<dbReference type="GO" id="GO:0042803">
    <property type="term" value="F:protein homodimerization activity"/>
    <property type="evidence" value="ECO:0000250"/>
    <property type="project" value="UniProtKB"/>
</dbReference>
<dbReference type="GO" id="GO:0000978">
    <property type="term" value="F:RNA polymerase II cis-regulatory region sequence-specific DNA binding"/>
    <property type="evidence" value="ECO:0007669"/>
    <property type="project" value="TreeGrafter"/>
</dbReference>
<dbReference type="GO" id="GO:0000976">
    <property type="term" value="F:transcription cis-regulatory region binding"/>
    <property type="evidence" value="ECO:0000250"/>
    <property type="project" value="UniProtKB"/>
</dbReference>
<dbReference type="GO" id="GO:0007420">
    <property type="term" value="P:brain development"/>
    <property type="evidence" value="ECO:0000250"/>
    <property type="project" value="UniProtKB"/>
</dbReference>
<dbReference type="GO" id="GO:0001502">
    <property type="term" value="P:cartilage condensation"/>
    <property type="evidence" value="ECO:0000250"/>
    <property type="project" value="UniProtKB"/>
</dbReference>
<dbReference type="GO" id="GO:0051216">
    <property type="term" value="P:cartilage development"/>
    <property type="evidence" value="ECO:0000250"/>
    <property type="project" value="UniProtKB"/>
</dbReference>
<dbReference type="GO" id="GO:0045165">
    <property type="term" value="P:cell fate commitment"/>
    <property type="evidence" value="ECO:0007669"/>
    <property type="project" value="TreeGrafter"/>
</dbReference>
<dbReference type="GO" id="GO:0002062">
    <property type="term" value="P:chondrocyte differentiation"/>
    <property type="evidence" value="ECO:0000250"/>
    <property type="project" value="UniProtKB"/>
</dbReference>
<dbReference type="GO" id="GO:0032332">
    <property type="term" value="P:positive regulation of chondrocyte differentiation"/>
    <property type="evidence" value="ECO:0007669"/>
    <property type="project" value="TreeGrafter"/>
</dbReference>
<dbReference type="GO" id="GO:0021529">
    <property type="term" value="P:spinal cord oligodendrocyte cell differentiation"/>
    <property type="evidence" value="ECO:0000250"/>
    <property type="project" value="UniProtKB"/>
</dbReference>
<dbReference type="CDD" id="cd22042">
    <property type="entry name" value="HMG-box_EGL13-like"/>
    <property type="match status" value="1"/>
</dbReference>
<dbReference type="FunFam" id="1.10.30.10:FF:000003">
    <property type="entry name" value="Putative transcription factor SOX-6"/>
    <property type="match status" value="1"/>
</dbReference>
<dbReference type="Gene3D" id="1.10.30.10">
    <property type="entry name" value="High mobility group box domain"/>
    <property type="match status" value="1"/>
</dbReference>
<dbReference type="InterPro" id="IPR009071">
    <property type="entry name" value="HMG_box_dom"/>
</dbReference>
<dbReference type="InterPro" id="IPR036910">
    <property type="entry name" value="HMG_box_dom_sf"/>
</dbReference>
<dbReference type="InterPro" id="IPR051356">
    <property type="entry name" value="SOX/SOX-like_TF"/>
</dbReference>
<dbReference type="PANTHER" id="PTHR45789">
    <property type="entry name" value="FI18025P1"/>
    <property type="match status" value="1"/>
</dbReference>
<dbReference type="PANTHER" id="PTHR45789:SF1">
    <property type="entry name" value="TRANSCRIPTION FACTOR SOX-6"/>
    <property type="match status" value="1"/>
</dbReference>
<dbReference type="Pfam" id="PF00505">
    <property type="entry name" value="HMG_box"/>
    <property type="match status" value="1"/>
</dbReference>
<dbReference type="SMART" id="SM00398">
    <property type="entry name" value="HMG"/>
    <property type="match status" value="1"/>
</dbReference>
<dbReference type="SUPFAM" id="SSF47095">
    <property type="entry name" value="HMG-box"/>
    <property type="match status" value="1"/>
</dbReference>
<dbReference type="PROSITE" id="PS50118">
    <property type="entry name" value="HMG_BOX_2"/>
    <property type="match status" value="1"/>
</dbReference>
<proteinExistence type="evidence at transcript level"/>
<organism>
    <name type="scientific">Pongo abelii</name>
    <name type="common">Sumatran orangutan</name>
    <name type="synonym">Pongo pygmaeus abelii</name>
    <dbReference type="NCBI Taxonomy" id="9601"/>
    <lineage>
        <taxon>Eukaryota</taxon>
        <taxon>Metazoa</taxon>
        <taxon>Chordata</taxon>
        <taxon>Craniata</taxon>
        <taxon>Vertebrata</taxon>
        <taxon>Euteleostomi</taxon>
        <taxon>Mammalia</taxon>
        <taxon>Eutheria</taxon>
        <taxon>Euarchontoglires</taxon>
        <taxon>Primates</taxon>
        <taxon>Haplorrhini</taxon>
        <taxon>Catarrhini</taxon>
        <taxon>Hominidae</taxon>
        <taxon>Pongo</taxon>
    </lineage>
</organism>
<name>SOX6_PONAB</name>
<sequence>MSSKQATSPFACAADGEDAMTQDLTSREKEEGSDQHVASHLPLHPIMHNKPHSEELPTLVNTIQQDADWDSVLSSQQRMESENNKLCSLYSFRNTSTSPHKPDEGSRDREIMTSVTFGTPERRKGSLADVVDTLKQKKLEEMTRTEQEDPSCMEKLLSKDWKEKMERLNTSELLGEIKGTPESLAEKERQLSTMITQLISLREQLLAAHDEQKKLAASQIEKQRQQMDLARQQQEQIARQQQQLLQQQHKINLLQQQIQVQGHMPPLMIPIFPHDQRTLAAAAAAQQGFLFPPGITYKPGDNYPVQFIPSTMAAAAASGLSPLQLQQLYAAQLASMQVSPGAKMPSTPQPPNTAGTVSPTGIKNEKRGTSPVTQVKDEAAAQPLNLSSRPKTAEPVKSPTSPTQNLFPASKTSPVNLPNKSSIPSPIGGSLGRGSSLDILSSLNSPALFGDQDTVMKAIQEARKMREQIQREQQQQQPHGVDGKLSSINNMGLNNCRNEKERTRFENLGPQLTGKSNEDGKLGPGVIDLTRPEDAEGSKAMNGSAAKLQQYYCWPTGGATVAEARVYRDARGRASSEPHIKRPMNAFMVWAKDERRKILQAFPDMHNSNISKILGSRWKSMSNQEKQPYYEEQARLSKIHLEKYPNYKYKPRPKRTCIVDGKKLRIGEYKQLMRSRRQEMRQFFTVGQQPQIPITTGTGVVYPGAITMATTTPSPQMTSDCSSTSASPEPSLPVIQSTYGMKTDGGSLAGNEMINGEDEMEMYDDYEDDPKSDYSSENEAPEAVSAN</sequence>
<comment type="function">
    <text evidence="3">Transcription factor that plays a key role in several developmental processes, including neurogenesis, chondrocytes differentiation and cartilage formation. Specifically binds the 5'-AACAAT-3' DNA motif present in enhancers and super-enhancers and promotes expression of genes important for chondrogenesis. Required for overt chondrogenesis when condensed prechondrocytes differentiate into early stage chondrocytes: SOX5 and SOX6 cooperatively bind with SOX9 on active enhancers and super-enhancers associated with cartilage-specific genes, and thereby potentiate SOX9's ability to transactivate. Not involved in precartilaginous condensation, the first step in chondrogenesis, during which skeletal progenitors differentiate into prechondrocytes. Together with SOX5, required to form and maintain a pool of highly proliferating chondroblasts between epiphyses and metaphyses, to form columnar chondroblasts, delay chondrocyte prehypertrophy but promote hypertrophy, and to delay terminal differentiation of chondrocytes on contact with ossification fronts. Binds to the proximal promoter region of the myelin protein MPZ gene, and is thereby involved in the differentiation of oligodendroglia in the developing spinal tube. Binds to the gene promoter of MBP and acts as a transcriptional repressor.</text>
</comment>
<comment type="subunit">
    <text evidence="3">Homodimer (By similarity). Interacts with DAZAP2 (By similarity). May interact with CENPK (By similarity).</text>
</comment>
<comment type="subcellular location">
    <subcellularLocation>
        <location evidence="3 5">Nucleus</location>
    </subcellularLocation>
    <subcellularLocation>
        <location evidence="3">Cytoplasm</location>
    </subcellularLocation>
</comment>
<comment type="PTM">
    <text evidence="1">Sumoylation inhibits the transcriptional activity.</text>
</comment>
<reference key="1">
    <citation type="submission" date="2004-11" db="EMBL/GenBank/DDBJ databases">
        <authorList>
            <consortium name="The German cDNA consortium"/>
        </authorList>
    </citation>
    <scope>NUCLEOTIDE SEQUENCE [LARGE SCALE MRNA]</scope>
    <source>
        <tissue>Kidney</tissue>
    </source>
</reference>
<evidence type="ECO:0000250" key="1"/>
<evidence type="ECO:0000250" key="2">
    <source>
        <dbReference type="UniProtKB" id="P35712"/>
    </source>
</evidence>
<evidence type="ECO:0000250" key="3">
    <source>
        <dbReference type="UniProtKB" id="P40645"/>
    </source>
</evidence>
<evidence type="ECO:0000255" key="4"/>
<evidence type="ECO:0000255" key="5">
    <source>
        <dbReference type="PROSITE-ProRule" id="PRU00267"/>
    </source>
</evidence>
<evidence type="ECO:0000256" key="6">
    <source>
        <dbReference type="SAM" id="MobiDB-lite"/>
    </source>
</evidence>
<evidence type="ECO:0000305" key="7"/>
<gene>
    <name evidence="2" type="primary">SOX6</name>
</gene>
<protein>
    <recommendedName>
        <fullName evidence="7">Transcription factor SOX-6</fullName>
    </recommendedName>
</protein>
<feature type="chain" id="PRO_0000310865" description="Transcription factor SOX-6">
    <location>
        <begin position="1"/>
        <end position="787"/>
    </location>
</feature>
<feature type="DNA-binding region" description="HMG box" evidence="5">
    <location>
        <begin position="580"/>
        <end position="648"/>
    </location>
</feature>
<feature type="region of interest" description="Disordered" evidence="6">
    <location>
        <begin position="1"/>
        <end position="46"/>
    </location>
</feature>
<feature type="region of interest" description="Disordered" evidence="6">
    <location>
        <begin position="340"/>
        <end position="429"/>
    </location>
</feature>
<feature type="region of interest" description="Disordered" evidence="6">
    <location>
        <begin position="712"/>
        <end position="787"/>
    </location>
</feature>
<feature type="coiled-coil region" evidence="4">
    <location>
        <begin position="184"/>
        <end position="262"/>
    </location>
</feature>
<feature type="compositionally biased region" description="Basic and acidic residues" evidence="6">
    <location>
        <begin position="25"/>
        <end position="34"/>
    </location>
</feature>
<feature type="compositionally biased region" description="Polar residues" evidence="6">
    <location>
        <begin position="352"/>
        <end position="361"/>
    </location>
</feature>
<feature type="compositionally biased region" description="Polar residues" evidence="6">
    <location>
        <begin position="398"/>
        <end position="420"/>
    </location>
</feature>
<feature type="compositionally biased region" description="Polar residues" evidence="6">
    <location>
        <begin position="712"/>
        <end position="740"/>
    </location>
</feature>
<feature type="compositionally biased region" description="Acidic residues" evidence="6">
    <location>
        <begin position="755"/>
        <end position="768"/>
    </location>
</feature>
<feature type="modified residue" description="Phosphothreonine" evidence="2">
    <location>
        <position position="119"/>
    </location>
</feature>
<feature type="modified residue" description="Phosphoserine" evidence="2">
    <location>
        <position position="358"/>
    </location>
</feature>
<feature type="modified residue" description="Phosphothreonine" evidence="3">
    <location>
        <position position="360"/>
    </location>
</feature>
<feature type="modified residue" description="Phosphoserine" evidence="2">
    <location>
        <position position="398"/>
    </location>
</feature>
<feature type="modified residue" description="Phosphoserine" evidence="3">
    <location>
        <position position="401"/>
    </location>
</feature>
<feature type="cross-link" description="Glycyl lysine isopeptide (Lys-Gly) (interchain with G-Cter in SUMO)" evidence="1">
    <location>
        <position position="363"/>
    </location>
</feature>
<feature type="cross-link" description="Glycyl lysine isopeptide (Lys-Gly) (interchain with G-Cter in SUMO)" evidence="1">
    <location>
        <position position="376"/>
    </location>
</feature>
<keyword id="KW-0010">Activator</keyword>
<keyword id="KW-0175">Coiled coil</keyword>
<keyword id="KW-0963">Cytoplasm</keyword>
<keyword id="KW-0217">Developmental protein</keyword>
<keyword id="KW-0221">Differentiation</keyword>
<keyword id="KW-0238">DNA-binding</keyword>
<keyword id="KW-1017">Isopeptide bond</keyword>
<keyword id="KW-0539">Nucleus</keyword>
<keyword id="KW-0597">Phosphoprotein</keyword>
<keyword id="KW-1185">Reference proteome</keyword>
<keyword id="KW-0678">Repressor</keyword>
<keyword id="KW-0804">Transcription</keyword>
<keyword id="KW-0805">Transcription regulation</keyword>
<keyword id="KW-0832">Ubl conjugation</keyword>
<accession>Q5RCU4</accession>